<dbReference type="EMBL" id="CP001164">
    <property type="protein sequence ID" value="ACI35109.1"/>
    <property type="molecule type" value="Genomic_DNA"/>
</dbReference>
<dbReference type="RefSeq" id="WP_000543535.1">
    <property type="nucleotide sequence ID" value="NC_011353.1"/>
</dbReference>
<dbReference type="SMR" id="B5Z3R7"/>
<dbReference type="GeneID" id="93777047"/>
<dbReference type="KEGG" id="ecf:ECH74115_0495"/>
<dbReference type="HOGENOM" id="CLU_108412_0_0_6"/>
<dbReference type="GO" id="GO:0005524">
    <property type="term" value="F:ATP binding"/>
    <property type="evidence" value="ECO:0007669"/>
    <property type="project" value="UniProtKB-KW"/>
</dbReference>
<dbReference type="GO" id="GO:0003677">
    <property type="term" value="F:DNA binding"/>
    <property type="evidence" value="ECO:0007669"/>
    <property type="project" value="UniProtKB-KW"/>
</dbReference>
<dbReference type="GO" id="GO:0008270">
    <property type="term" value="F:zinc ion binding"/>
    <property type="evidence" value="ECO:0007669"/>
    <property type="project" value="UniProtKB-UniRule"/>
</dbReference>
<dbReference type="GO" id="GO:0045892">
    <property type="term" value="P:negative regulation of DNA-templated transcription"/>
    <property type="evidence" value="ECO:0007669"/>
    <property type="project" value="UniProtKB-UniRule"/>
</dbReference>
<dbReference type="HAMAP" id="MF_00440">
    <property type="entry name" value="NrdR"/>
    <property type="match status" value="1"/>
</dbReference>
<dbReference type="InterPro" id="IPR005144">
    <property type="entry name" value="ATP-cone_dom"/>
</dbReference>
<dbReference type="InterPro" id="IPR055173">
    <property type="entry name" value="NrdR-like_N"/>
</dbReference>
<dbReference type="InterPro" id="IPR003796">
    <property type="entry name" value="RNR_NrdR-like"/>
</dbReference>
<dbReference type="NCBIfam" id="TIGR00244">
    <property type="entry name" value="transcriptional regulator NrdR"/>
    <property type="match status" value="1"/>
</dbReference>
<dbReference type="PANTHER" id="PTHR30455">
    <property type="entry name" value="TRANSCRIPTIONAL REPRESSOR NRDR"/>
    <property type="match status" value="1"/>
</dbReference>
<dbReference type="PANTHER" id="PTHR30455:SF2">
    <property type="entry name" value="TRANSCRIPTIONAL REPRESSOR NRDR"/>
    <property type="match status" value="1"/>
</dbReference>
<dbReference type="Pfam" id="PF03477">
    <property type="entry name" value="ATP-cone"/>
    <property type="match status" value="1"/>
</dbReference>
<dbReference type="Pfam" id="PF22811">
    <property type="entry name" value="Zn_ribbon_NrdR"/>
    <property type="match status" value="1"/>
</dbReference>
<dbReference type="PROSITE" id="PS51161">
    <property type="entry name" value="ATP_CONE"/>
    <property type="match status" value="1"/>
</dbReference>
<name>NRDR_ECO5E</name>
<feature type="chain" id="PRO_1000124499" description="Transcriptional repressor NrdR">
    <location>
        <begin position="1"/>
        <end position="149"/>
    </location>
</feature>
<feature type="domain" description="ATP-cone" evidence="1">
    <location>
        <begin position="49"/>
        <end position="139"/>
    </location>
</feature>
<feature type="zinc finger region" evidence="1">
    <location>
        <begin position="3"/>
        <end position="34"/>
    </location>
</feature>
<accession>B5Z3R7</accession>
<proteinExistence type="inferred from homology"/>
<keyword id="KW-0067">ATP-binding</keyword>
<keyword id="KW-0238">DNA-binding</keyword>
<keyword id="KW-0479">Metal-binding</keyword>
<keyword id="KW-0547">Nucleotide-binding</keyword>
<keyword id="KW-0678">Repressor</keyword>
<keyword id="KW-0804">Transcription</keyword>
<keyword id="KW-0805">Transcription regulation</keyword>
<keyword id="KW-0862">Zinc</keyword>
<keyword id="KW-0863">Zinc-finger</keyword>
<protein>
    <recommendedName>
        <fullName evidence="1">Transcriptional repressor NrdR</fullName>
    </recommendedName>
</protein>
<organism>
    <name type="scientific">Escherichia coli O157:H7 (strain EC4115 / EHEC)</name>
    <dbReference type="NCBI Taxonomy" id="444450"/>
    <lineage>
        <taxon>Bacteria</taxon>
        <taxon>Pseudomonadati</taxon>
        <taxon>Pseudomonadota</taxon>
        <taxon>Gammaproteobacteria</taxon>
        <taxon>Enterobacterales</taxon>
        <taxon>Enterobacteriaceae</taxon>
        <taxon>Escherichia</taxon>
    </lineage>
</organism>
<gene>
    <name evidence="1" type="primary">nrdR</name>
    <name type="ordered locus">ECH74115_0495</name>
</gene>
<evidence type="ECO:0000255" key="1">
    <source>
        <dbReference type="HAMAP-Rule" id="MF_00440"/>
    </source>
</evidence>
<sequence>MHCPFCFAVDTKVIDSRLVGEGSSVRRRRQCLVCNERFTTFEVAELVMPRVVKSNDVREPFNEEKLRSGMLRALEKRPVSSDDVEMAINHIKSQLRATGEREVPSKMIGNLVMEQLKKLDKVAYIRFASVYRSFEDIKEFGEEIARLED</sequence>
<comment type="function">
    <text evidence="1">Negatively regulates transcription of bacterial ribonucleotide reductase nrd genes and operons by binding to NrdR-boxes.</text>
</comment>
<comment type="cofactor">
    <cofactor evidence="1">
        <name>Zn(2+)</name>
        <dbReference type="ChEBI" id="CHEBI:29105"/>
    </cofactor>
    <text evidence="1">Binds 1 zinc ion.</text>
</comment>
<comment type="similarity">
    <text evidence="1">Belongs to the NrdR family.</text>
</comment>
<reference key="1">
    <citation type="journal article" date="2011" name="Proc. Natl. Acad. Sci. U.S.A.">
        <title>Genomic anatomy of Escherichia coli O157:H7 outbreaks.</title>
        <authorList>
            <person name="Eppinger M."/>
            <person name="Mammel M.K."/>
            <person name="Leclerc J.E."/>
            <person name="Ravel J."/>
            <person name="Cebula T.A."/>
        </authorList>
    </citation>
    <scope>NUCLEOTIDE SEQUENCE [LARGE SCALE GENOMIC DNA]</scope>
    <source>
        <strain>EC4115 / EHEC</strain>
    </source>
</reference>